<name>DPH4_SCHPO</name>
<reference key="1">
    <citation type="journal article" date="2002" name="Nature">
        <title>The genome sequence of Schizosaccharomyces pombe.</title>
        <authorList>
            <person name="Wood V."/>
            <person name="Gwilliam R."/>
            <person name="Rajandream M.A."/>
            <person name="Lyne M.H."/>
            <person name="Lyne R."/>
            <person name="Stewart A."/>
            <person name="Sgouros J.G."/>
            <person name="Peat N."/>
            <person name="Hayles J."/>
            <person name="Baker S.G."/>
            <person name="Basham D."/>
            <person name="Bowman S."/>
            <person name="Brooks K."/>
            <person name="Brown D."/>
            <person name="Brown S."/>
            <person name="Chillingworth T."/>
            <person name="Churcher C.M."/>
            <person name="Collins M."/>
            <person name="Connor R."/>
            <person name="Cronin A."/>
            <person name="Davis P."/>
            <person name="Feltwell T."/>
            <person name="Fraser A."/>
            <person name="Gentles S."/>
            <person name="Goble A."/>
            <person name="Hamlin N."/>
            <person name="Harris D.E."/>
            <person name="Hidalgo J."/>
            <person name="Hodgson G."/>
            <person name="Holroyd S."/>
            <person name="Hornsby T."/>
            <person name="Howarth S."/>
            <person name="Huckle E.J."/>
            <person name="Hunt S."/>
            <person name="Jagels K."/>
            <person name="James K.D."/>
            <person name="Jones L."/>
            <person name="Jones M."/>
            <person name="Leather S."/>
            <person name="McDonald S."/>
            <person name="McLean J."/>
            <person name="Mooney P."/>
            <person name="Moule S."/>
            <person name="Mungall K.L."/>
            <person name="Murphy L.D."/>
            <person name="Niblett D."/>
            <person name="Odell C."/>
            <person name="Oliver K."/>
            <person name="O'Neil S."/>
            <person name="Pearson D."/>
            <person name="Quail M.A."/>
            <person name="Rabbinowitsch E."/>
            <person name="Rutherford K.M."/>
            <person name="Rutter S."/>
            <person name="Saunders D."/>
            <person name="Seeger K."/>
            <person name="Sharp S."/>
            <person name="Skelton J."/>
            <person name="Simmonds M.N."/>
            <person name="Squares R."/>
            <person name="Squares S."/>
            <person name="Stevens K."/>
            <person name="Taylor K."/>
            <person name="Taylor R.G."/>
            <person name="Tivey A."/>
            <person name="Walsh S.V."/>
            <person name="Warren T."/>
            <person name="Whitehead S."/>
            <person name="Woodward J.R."/>
            <person name="Volckaert G."/>
            <person name="Aert R."/>
            <person name="Robben J."/>
            <person name="Grymonprez B."/>
            <person name="Weltjens I."/>
            <person name="Vanstreels E."/>
            <person name="Rieger M."/>
            <person name="Schaefer M."/>
            <person name="Mueller-Auer S."/>
            <person name="Gabel C."/>
            <person name="Fuchs M."/>
            <person name="Duesterhoeft A."/>
            <person name="Fritzc C."/>
            <person name="Holzer E."/>
            <person name="Moestl D."/>
            <person name="Hilbert H."/>
            <person name="Borzym K."/>
            <person name="Langer I."/>
            <person name="Beck A."/>
            <person name="Lehrach H."/>
            <person name="Reinhardt R."/>
            <person name="Pohl T.M."/>
            <person name="Eger P."/>
            <person name="Zimmermann W."/>
            <person name="Wedler H."/>
            <person name="Wambutt R."/>
            <person name="Purnelle B."/>
            <person name="Goffeau A."/>
            <person name="Cadieu E."/>
            <person name="Dreano S."/>
            <person name="Gloux S."/>
            <person name="Lelaure V."/>
            <person name="Mottier S."/>
            <person name="Galibert F."/>
            <person name="Aves S.J."/>
            <person name="Xiang Z."/>
            <person name="Hunt C."/>
            <person name="Moore K."/>
            <person name="Hurst S.M."/>
            <person name="Lucas M."/>
            <person name="Rochet M."/>
            <person name="Gaillardin C."/>
            <person name="Tallada V.A."/>
            <person name="Garzon A."/>
            <person name="Thode G."/>
            <person name="Daga R.R."/>
            <person name="Cruzado L."/>
            <person name="Jimenez J."/>
            <person name="Sanchez M."/>
            <person name="del Rey F."/>
            <person name="Benito J."/>
            <person name="Dominguez A."/>
            <person name="Revuelta J.L."/>
            <person name="Moreno S."/>
            <person name="Armstrong J."/>
            <person name="Forsburg S.L."/>
            <person name="Cerutti L."/>
            <person name="Lowe T."/>
            <person name="McCombie W.R."/>
            <person name="Paulsen I."/>
            <person name="Potashkin J."/>
            <person name="Shpakovski G.V."/>
            <person name="Ussery D."/>
            <person name="Barrell B.G."/>
            <person name="Nurse P."/>
        </authorList>
    </citation>
    <scope>NUCLEOTIDE SEQUENCE [LARGE SCALE GENOMIC DNA]</scope>
    <source>
        <strain>972 / ATCC 24843</strain>
    </source>
</reference>
<reference key="2">
    <citation type="journal article" date="2017" name="Sci. Rep.">
        <title>Elp3 and Dph3 of Schizosaccharomyces pombe mediate cellular stress responses through tRNALysUUU modifications.</title>
        <authorList>
            <person name="Villahermosa D."/>
            <person name="Fleck O."/>
        </authorList>
    </citation>
    <scope>DISRUPTION PHENOTYPE</scope>
</reference>
<keyword id="KW-0963">Cytoplasm</keyword>
<keyword id="KW-0408">Iron</keyword>
<keyword id="KW-0479">Metal-binding</keyword>
<keyword id="KW-0539">Nucleus</keyword>
<keyword id="KW-1185">Reference proteome</keyword>
<keyword id="KW-0862">Zinc</keyword>
<organism>
    <name type="scientific">Schizosaccharomyces pombe (strain 972 / ATCC 24843)</name>
    <name type="common">Fission yeast</name>
    <dbReference type="NCBI Taxonomy" id="284812"/>
    <lineage>
        <taxon>Eukaryota</taxon>
        <taxon>Fungi</taxon>
        <taxon>Dikarya</taxon>
        <taxon>Ascomycota</taxon>
        <taxon>Taphrinomycotina</taxon>
        <taxon>Schizosaccharomycetes</taxon>
        <taxon>Schizosaccharomycetales</taxon>
        <taxon>Schizosaccharomycetaceae</taxon>
        <taxon>Schizosaccharomyces</taxon>
    </lineage>
</organism>
<gene>
    <name type="primary">dph4</name>
    <name type="ORF">SPAC926.05c</name>
</gene>
<proteinExistence type="inferred from homology"/>
<feature type="chain" id="PRO_0000071152" description="Diphthamide biosynthesis protein 4">
    <location>
        <begin position="1"/>
        <end position="139"/>
    </location>
</feature>
<feature type="domain" description="J" evidence="2">
    <location>
        <begin position="2"/>
        <end position="69"/>
    </location>
</feature>
<feature type="domain" description="DPH-type MB" evidence="3">
    <location>
        <begin position="76"/>
        <end position="133"/>
    </location>
</feature>
<feature type="binding site" evidence="3">
    <location>
        <position position="97"/>
    </location>
    <ligand>
        <name>Zn(2+)</name>
        <dbReference type="ChEBI" id="CHEBI:29105"/>
    </ligand>
</feature>
<feature type="binding site" evidence="3">
    <location>
        <position position="99"/>
    </location>
    <ligand>
        <name>Zn(2+)</name>
        <dbReference type="ChEBI" id="CHEBI:29105"/>
    </ligand>
</feature>
<feature type="binding site" evidence="3">
    <location>
        <position position="121"/>
    </location>
    <ligand>
        <name>Zn(2+)</name>
        <dbReference type="ChEBI" id="CHEBI:29105"/>
    </ligand>
</feature>
<feature type="binding site" evidence="3">
    <location>
        <position position="124"/>
    </location>
    <ligand>
        <name>Zn(2+)</name>
        <dbReference type="ChEBI" id="CHEBI:29105"/>
    </ligand>
</feature>
<dbReference type="EMBL" id="CU329670">
    <property type="protein sequence ID" value="CAB54153.1"/>
    <property type="molecule type" value="Genomic_DNA"/>
</dbReference>
<dbReference type="PIR" id="T39203">
    <property type="entry name" value="T39203"/>
</dbReference>
<dbReference type="RefSeq" id="NP_594366.1">
    <property type="nucleotide sequence ID" value="NM_001019787.2"/>
</dbReference>
<dbReference type="SMR" id="Q9UUG3"/>
<dbReference type="BioGRID" id="279951">
    <property type="interactions" value="1"/>
</dbReference>
<dbReference type="FunCoup" id="Q9UUG3">
    <property type="interactions" value="168"/>
</dbReference>
<dbReference type="STRING" id="284812.Q9UUG3"/>
<dbReference type="iPTMnet" id="Q9UUG3"/>
<dbReference type="PaxDb" id="4896-SPAC926.05c.1"/>
<dbReference type="EnsemblFungi" id="SPAC926.05c.1">
    <property type="protein sequence ID" value="SPAC926.05c.1:pep"/>
    <property type="gene ID" value="SPAC926.05c"/>
</dbReference>
<dbReference type="GeneID" id="2543534"/>
<dbReference type="KEGG" id="spo:2543534"/>
<dbReference type="PomBase" id="SPAC926.05c">
    <property type="gene designation" value="dph4"/>
</dbReference>
<dbReference type="VEuPathDB" id="FungiDB:SPAC926.05c"/>
<dbReference type="eggNOG" id="KOG0714">
    <property type="taxonomic scope" value="Eukaryota"/>
</dbReference>
<dbReference type="eggNOG" id="KOG2923">
    <property type="taxonomic scope" value="Eukaryota"/>
</dbReference>
<dbReference type="HOGENOM" id="CLU_017633_7_1_1"/>
<dbReference type="InParanoid" id="Q9UUG3"/>
<dbReference type="OMA" id="IIGCRGC"/>
<dbReference type="PhylomeDB" id="Q9UUG3"/>
<dbReference type="UniPathway" id="UPA00559"/>
<dbReference type="PRO" id="PR:Q9UUG3"/>
<dbReference type="Proteomes" id="UP000002485">
    <property type="component" value="Chromosome I"/>
</dbReference>
<dbReference type="GO" id="GO:0005829">
    <property type="term" value="C:cytosol"/>
    <property type="evidence" value="ECO:0007005"/>
    <property type="project" value="PomBase"/>
</dbReference>
<dbReference type="GO" id="GO:0005634">
    <property type="term" value="C:nucleus"/>
    <property type="evidence" value="ECO:0007005"/>
    <property type="project" value="PomBase"/>
</dbReference>
<dbReference type="GO" id="GO:0030544">
    <property type="term" value="F:Hsp70 protein binding"/>
    <property type="evidence" value="ECO:0000255"/>
    <property type="project" value="PomBase"/>
</dbReference>
<dbReference type="GO" id="GO:0046872">
    <property type="term" value="F:metal ion binding"/>
    <property type="evidence" value="ECO:0007669"/>
    <property type="project" value="UniProtKB-KW"/>
</dbReference>
<dbReference type="GO" id="GO:0017183">
    <property type="term" value="P:protein histidyl modification to diphthamide"/>
    <property type="evidence" value="ECO:0000266"/>
    <property type="project" value="PomBase"/>
</dbReference>
<dbReference type="GO" id="GO:2000765">
    <property type="term" value="P:regulation of cytoplasmic translation"/>
    <property type="evidence" value="ECO:0000305"/>
    <property type="project" value="PomBase"/>
</dbReference>
<dbReference type="CDD" id="cd06257">
    <property type="entry name" value="DnaJ"/>
    <property type="match status" value="1"/>
</dbReference>
<dbReference type="FunFam" id="3.10.660.10:FF:000010">
    <property type="entry name" value="Diphthamide biosynthesis protein 4"/>
    <property type="match status" value="1"/>
</dbReference>
<dbReference type="Gene3D" id="1.10.287.110">
    <property type="entry name" value="DnaJ domain"/>
    <property type="match status" value="1"/>
</dbReference>
<dbReference type="Gene3D" id="3.10.660.10">
    <property type="entry name" value="DPH Zinc finger"/>
    <property type="match status" value="1"/>
</dbReference>
<dbReference type="InterPro" id="IPR001623">
    <property type="entry name" value="DnaJ_domain"/>
</dbReference>
<dbReference type="InterPro" id="IPR044248">
    <property type="entry name" value="DPH3/4-like"/>
</dbReference>
<dbReference type="InterPro" id="IPR007872">
    <property type="entry name" value="DPH_MB_dom"/>
</dbReference>
<dbReference type="InterPro" id="IPR036671">
    <property type="entry name" value="DPH_MB_sf"/>
</dbReference>
<dbReference type="InterPro" id="IPR036869">
    <property type="entry name" value="J_dom_sf"/>
</dbReference>
<dbReference type="PANTHER" id="PTHR21454">
    <property type="entry name" value="DPH3 HOMOLOG-RELATED"/>
    <property type="match status" value="1"/>
</dbReference>
<dbReference type="PANTHER" id="PTHR21454:SF49">
    <property type="entry name" value="RE24848P"/>
    <property type="match status" value="1"/>
</dbReference>
<dbReference type="Pfam" id="PF00226">
    <property type="entry name" value="DnaJ"/>
    <property type="match status" value="1"/>
</dbReference>
<dbReference type="Pfam" id="PF05207">
    <property type="entry name" value="Zn_ribbon_CSL"/>
    <property type="match status" value="1"/>
</dbReference>
<dbReference type="PRINTS" id="PR00625">
    <property type="entry name" value="JDOMAIN"/>
</dbReference>
<dbReference type="SMART" id="SM00271">
    <property type="entry name" value="DnaJ"/>
    <property type="match status" value="1"/>
</dbReference>
<dbReference type="SUPFAM" id="SSF46565">
    <property type="entry name" value="Chaperone J-domain"/>
    <property type="match status" value="1"/>
</dbReference>
<dbReference type="PROSITE" id="PS50076">
    <property type="entry name" value="DNAJ_2"/>
    <property type="match status" value="1"/>
</dbReference>
<dbReference type="PROSITE" id="PS51074">
    <property type="entry name" value="DPH_MB"/>
    <property type="match status" value="1"/>
</dbReference>
<protein>
    <recommendedName>
        <fullName>Diphthamide biosynthesis protein 4</fullName>
    </recommendedName>
</protein>
<sequence length="139" mass="16097">MNHYSVLNLKDGKTYTDDEIKEAYRKALLLFHPDKCKEKPSVVYTIDQVKEAYQVLSSEKDRQQYQIKQEEESSHYYSIVDLSEFEELDNGSYYYPCRCGDLGGYVVTEDDLENNRSVVPCMGCSLTIQVDYEIAESDS</sequence>
<evidence type="ECO:0000250" key="1">
    <source>
        <dbReference type="UniProtKB" id="P47138"/>
    </source>
</evidence>
<evidence type="ECO:0000255" key="2">
    <source>
        <dbReference type="PROSITE-ProRule" id="PRU00286"/>
    </source>
</evidence>
<evidence type="ECO:0000255" key="3">
    <source>
        <dbReference type="PROSITE-ProRule" id="PRU00456"/>
    </source>
</evidence>
<evidence type="ECO:0000269" key="4">
    <source>
    </source>
</evidence>
<evidence type="ECO:0000305" key="5"/>
<comment type="function">
    <text evidence="1">Required for the first step of diphthamide biosynthesis, the transfer of 3-amino-3-carboxypropyl from S-adenosyl-L-methionine to a histidine residue. Diphthamide is a post-translational modification of histidine which occurs in elongation factor 2 (By similarity).</text>
</comment>
<comment type="pathway">
    <text>Protein modification; peptidyl-diphthamide biosynthesis.</text>
</comment>
<comment type="subcellular location">
    <subcellularLocation>
        <location evidence="1">Cytoplasm</location>
    </subcellularLocation>
    <subcellularLocation>
        <location evidence="1">Nucleus</location>
    </subcellularLocation>
</comment>
<comment type="domain">
    <text evidence="3">The DPH-type metal-binding (MB) domain can bind either zinc or iron ions.</text>
</comment>
<comment type="disruption phenotype">
    <text evidence="4">Sensitive to methyl methanesulfonate (MMS, causes DNA breaks) and hydroxyurea (HU, ribonucleotide reductase inhibitor).</text>
</comment>
<comment type="similarity">
    <text evidence="5">Belongs to the DPH4 family.</text>
</comment>
<accession>Q9UUG3</accession>